<gene>
    <name evidence="1" type="primary">aroD</name>
    <name type="ordered locus">ECSE_1816</name>
</gene>
<evidence type="ECO:0000255" key="1">
    <source>
        <dbReference type="HAMAP-Rule" id="MF_00214"/>
    </source>
</evidence>
<keyword id="KW-0028">Amino-acid biosynthesis</keyword>
<keyword id="KW-0057">Aromatic amino acid biosynthesis</keyword>
<keyword id="KW-0456">Lyase</keyword>
<keyword id="KW-0704">Schiff base</keyword>
<name>AROD_ECOSE</name>
<feature type="chain" id="PRO_1000099906" description="3-dehydroquinate dehydratase">
    <location>
        <begin position="1"/>
        <end position="252"/>
    </location>
</feature>
<feature type="active site" description="Proton donor/acceptor" evidence="1">
    <location>
        <position position="143"/>
    </location>
</feature>
<feature type="active site" description="Schiff-base intermediate with substrate" evidence="1">
    <location>
        <position position="170"/>
    </location>
</feature>
<feature type="binding site" evidence="1">
    <location>
        <position position="21"/>
    </location>
    <ligand>
        <name>3-dehydroquinate</name>
        <dbReference type="ChEBI" id="CHEBI:32364"/>
    </ligand>
</feature>
<feature type="binding site" evidence="1">
    <location>
        <begin position="46"/>
        <end position="48"/>
    </location>
    <ligand>
        <name>3-dehydroquinate</name>
        <dbReference type="ChEBI" id="CHEBI:32364"/>
    </ligand>
</feature>
<feature type="binding site" evidence="1">
    <location>
        <position position="82"/>
    </location>
    <ligand>
        <name>3-dehydroquinate</name>
        <dbReference type="ChEBI" id="CHEBI:32364"/>
    </ligand>
</feature>
<feature type="binding site" evidence="1">
    <location>
        <position position="213"/>
    </location>
    <ligand>
        <name>3-dehydroquinate</name>
        <dbReference type="ChEBI" id="CHEBI:32364"/>
    </ligand>
</feature>
<feature type="binding site" evidence="1">
    <location>
        <position position="232"/>
    </location>
    <ligand>
        <name>3-dehydroquinate</name>
        <dbReference type="ChEBI" id="CHEBI:32364"/>
    </ligand>
</feature>
<feature type="binding site" evidence="1">
    <location>
        <position position="236"/>
    </location>
    <ligand>
        <name>3-dehydroquinate</name>
        <dbReference type="ChEBI" id="CHEBI:32364"/>
    </ligand>
</feature>
<reference key="1">
    <citation type="journal article" date="2008" name="DNA Res.">
        <title>Complete genome sequence and comparative analysis of the wild-type commensal Escherichia coli strain SE11 isolated from a healthy adult.</title>
        <authorList>
            <person name="Oshima K."/>
            <person name="Toh H."/>
            <person name="Ogura Y."/>
            <person name="Sasamoto H."/>
            <person name="Morita H."/>
            <person name="Park S.-H."/>
            <person name="Ooka T."/>
            <person name="Iyoda S."/>
            <person name="Taylor T.D."/>
            <person name="Hayashi T."/>
            <person name="Itoh K."/>
            <person name="Hattori M."/>
        </authorList>
    </citation>
    <scope>NUCLEOTIDE SEQUENCE [LARGE SCALE GENOMIC DNA]</scope>
    <source>
        <strain>SE11</strain>
    </source>
</reference>
<protein>
    <recommendedName>
        <fullName evidence="1">3-dehydroquinate dehydratase</fullName>
        <shortName evidence="1">3-dehydroquinase</shortName>
        <ecNumber evidence="1">4.2.1.10</ecNumber>
    </recommendedName>
    <alternativeName>
        <fullName evidence="1">Type I DHQase</fullName>
    </alternativeName>
    <alternativeName>
        <fullName evidence="1">Type I dehydroquinase</fullName>
        <shortName evidence="1">DHQ1</shortName>
    </alternativeName>
</protein>
<accession>B6IBD3</accession>
<sequence length="252" mass="27550">MKTVTVKDLVIGTGAPKIIVSLMAKDIARVKSEALAYREADFDILEWRVDHFADLSNVESVMAAAKILRETMPEKPLLFTFRSAKEGGEQAISTEAYIALNRAAIDSGLVDMIDLELFTGDDQVKETVAYAHAHDVKVVMSNHDFHKTPEAEEIIARLRKMQSFDADIPKIALMPQSTSDVLTLLTATLEMQEQYADRPIITMSMAKTGVISRLAGEVFGSAATFGAVKKASAPGQISVNDLRTVLTILHQA</sequence>
<organism>
    <name type="scientific">Escherichia coli (strain SE11)</name>
    <dbReference type="NCBI Taxonomy" id="409438"/>
    <lineage>
        <taxon>Bacteria</taxon>
        <taxon>Pseudomonadati</taxon>
        <taxon>Pseudomonadota</taxon>
        <taxon>Gammaproteobacteria</taxon>
        <taxon>Enterobacterales</taxon>
        <taxon>Enterobacteriaceae</taxon>
        <taxon>Escherichia</taxon>
    </lineage>
</organism>
<comment type="function">
    <text evidence="1">Involved in the third step of the chorismate pathway, which leads to the biosynthesis of aromatic amino acids. Catalyzes the cis-dehydration of 3-dehydroquinate (DHQ) and introduces the first double bond of the aromatic ring to yield 3-dehydroshikimate.</text>
</comment>
<comment type="catalytic activity">
    <reaction evidence="1">
        <text>3-dehydroquinate = 3-dehydroshikimate + H2O</text>
        <dbReference type="Rhea" id="RHEA:21096"/>
        <dbReference type="ChEBI" id="CHEBI:15377"/>
        <dbReference type="ChEBI" id="CHEBI:16630"/>
        <dbReference type="ChEBI" id="CHEBI:32364"/>
        <dbReference type="EC" id="4.2.1.10"/>
    </reaction>
</comment>
<comment type="pathway">
    <text evidence="1">Metabolic intermediate biosynthesis; chorismate biosynthesis; chorismate from D-erythrose 4-phosphate and phosphoenolpyruvate: step 3/7.</text>
</comment>
<comment type="subunit">
    <text evidence="1">Homodimer.</text>
</comment>
<comment type="similarity">
    <text evidence="1">Belongs to the type-I 3-dehydroquinase family.</text>
</comment>
<proteinExistence type="inferred from homology"/>
<dbReference type="EC" id="4.2.1.10" evidence="1"/>
<dbReference type="EMBL" id="AP009240">
    <property type="protein sequence ID" value="BAG77340.1"/>
    <property type="molecule type" value="Genomic_DNA"/>
</dbReference>
<dbReference type="RefSeq" id="WP_000860182.1">
    <property type="nucleotide sequence ID" value="NC_011415.1"/>
</dbReference>
<dbReference type="SMR" id="B6IBD3"/>
<dbReference type="KEGG" id="ecy:ECSE_1816"/>
<dbReference type="HOGENOM" id="CLU_064444_0_0_6"/>
<dbReference type="UniPathway" id="UPA00053">
    <property type="reaction ID" value="UER00086"/>
</dbReference>
<dbReference type="Proteomes" id="UP000008199">
    <property type="component" value="Chromosome"/>
</dbReference>
<dbReference type="GO" id="GO:0003855">
    <property type="term" value="F:3-dehydroquinate dehydratase activity"/>
    <property type="evidence" value="ECO:0007669"/>
    <property type="project" value="UniProtKB-UniRule"/>
</dbReference>
<dbReference type="GO" id="GO:0046279">
    <property type="term" value="P:3,4-dihydroxybenzoate biosynthetic process"/>
    <property type="evidence" value="ECO:0007669"/>
    <property type="project" value="UniProtKB-ARBA"/>
</dbReference>
<dbReference type="GO" id="GO:0008652">
    <property type="term" value="P:amino acid biosynthetic process"/>
    <property type="evidence" value="ECO:0007669"/>
    <property type="project" value="UniProtKB-KW"/>
</dbReference>
<dbReference type="GO" id="GO:0009073">
    <property type="term" value="P:aromatic amino acid family biosynthetic process"/>
    <property type="evidence" value="ECO:0007669"/>
    <property type="project" value="UniProtKB-KW"/>
</dbReference>
<dbReference type="GO" id="GO:0009423">
    <property type="term" value="P:chorismate biosynthetic process"/>
    <property type="evidence" value="ECO:0007669"/>
    <property type="project" value="UniProtKB-UniRule"/>
</dbReference>
<dbReference type="CDD" id="cd00502">
    <property type="entry name" value="DHQase_I"/>
    <property type="match status" value="1"/>
</dbReference>
<dbReference type="FunFam" id="3.20.20.70:FF:000047">
    <property type="entry name" value="3-dehydroquinate dehydratase"/>
    <property type="match status" value="1"/>
</dbReference>
<dbReference type="Gene3D" id="3.20.20.70">
    <property type="entry name" value="Aldolase class I"/>
    <property type="match status" value="1"/>
</dbReference>
<dbReference type="HAMAP" id="MF_00214">
    <property type="entry name" value="AroD"/>
    <property type="match status" value="1"/>
</dbReference>
<dbReference type="InterPro" id="IPR018508">
    <property type="entry name" value="3-dehydroquinate_DH_AS"/>
</dbReference>
<dbReference type="InterPro" id="IPR013785">
    <property type="entry name" value="Aldolase_TIM"/>
</dbReference>
<dbReference type="InterPro" id="IPR001381">
    <property type="entry name" value="DHquinase_I"/>
</dbReference>
<dbReference type="InterPro" id="IPR050146">
    <property type="entry name" value="Type-I_3-dehydroquinase"/>
</dbReference>
<dbReference type="NCBIfam" id="TIGR01093">
    <property type="entry name" value="aroD"/>
    <property type="match status" value="1"/>
</dbReference>
<dbReference type="PANTHER" id="PTHR43699">
    <property type="entry name" value="3-DEHYDROQUINATE DEHYDRATASE"/>
    <property type="match status" value="1"/>
</dbReference>
<dbReference type="PANTHER" id="PTHR43699:SF1">
    <property type="entry name" value="3-DEHYDROQUINATE DEHYDRATASE"/>
    <property type="match status" value="1"/>
</dbReference>
<dbReference type="Pfam" id="PF01487">
    <property type="entry name" value="DHquinase_I"/>
    <property type="match status" value="1"/>
</dbReference>
<dbReference type="SUPFAM" id="SSF51569">
    <property type="entry name" value="Aldolase"/>
    <property type="match status" value="1"/>
</dbReference>
<dbReference type="PROSITE" id="PS01028">
    <property type="entry name" value="DEHYDROQUINASE_I"/>
    <property type="match status" value="1"/>
</dbReference>